<keyword id="KW-0963">Cytoplasm</keyword>
<keyword id="KW-0269">Exonuclease</keyword>
<keyword id="KW-0378">Hydrolase</keyword>
<keyword id="KW-0540">Nuclease</keyword>
<keyword id="KW-1185">Reference proteome</keyword>
<protein>
    <recommendedName>
        <fullName evidence="1">Exodeoxyribonuclease 7 small subunit</fullName>
        <ecNumber evidence="1">3.1.11.6</ecNumber>
    </recommendedName>
    <alternativeName>
        <fullName evidence="1">Exodeoxyribonuclease VII small subunit</fullName>
        <shortName evidence="1">Exonuclease VII small subunit</shortName>
    </alternativeName>
</protein>
<dbReference type="EC" id="3.1.11.6" evidence="1"/>
<dbReference type="EMBL" id="CP000011">
    <property type="protein sequence ID" value="AAU45985.1"/>
    <property type="molecule type" value="Genomic_DNA"/>
</dbReference>
<dbReference type="RefSeq" id="WP_004190549.1">
    <property type="nucleotide sequence ID" value="NC_006349.2"/>
</dbReference>
<dbReference type="RefSeq" id="YP_105135.1">
    <property type="nucleotide sequence ID" value="NC_006349.2"/>
</dbReference>
<dbReference type="SMR" id="Q62DU3"/>
<dbReference type="KEGG" id="bma:BMAA0328"/>
<dbReference type="PATRIC" id="fig|243160.12.peg.3823"/>
<dbReference type="eggNOG" id="COG1722">
    <property type="taxonomic scope" value="Bacteria"/>
</dbReference>
<dbReference type="HOGENOM" id="CLU_145918_2_0_4"/>
<dbReference type="Proteomes" id="UP000006693">
    <property type="component" value="Chromosome 2"/>
</dbReference>
<dbReference type="GO" id="GO:0005829">
    <property type="term" value="C:cytosol"/>
    <property type="evidence" value="ECO:0007669"/>
    <property type="project" value="TreeGrafter"/>
</dbReference>
<dbReference type="GO" id="GO:0009318">
    <property type="term" value="C:exodeoxyribonuclease VII complex"/>
    <property type="evidence" value="ECO:0007669"/>
    <property type="project" value="InterPro"/>
</dbReference>
<dbReference type="GO" id="GO:0008855">
    <property type="term" value="F:exodeoxyribonuclease VII activity"/>
    <property type="evidence" value="ECO:0007669"/>
    <property type="project" value="UniProtKB-UniRule"/>
</dbReference>
<dbReference type="GO" id="GO:0006308">
    <property type="term" value="P:DNA catabolic process"/>
    <property type="evidence" value="ECO:0007669"/>
    <property type="project" value="UniProtKB-UniRule"/>
</dbReference>
<dbReference type="Gene3D" id="1.10.287.1040">
    <property type="entry name" value="Exonuclease VII, small subunit"/>
    <property type="match status" value="1"/>
</dbReference>
<dbReference type="HAMAP" id="MF_00337">
    <property type="entry name" value="Exonuc_7_S"/>
    <property type="match status" value="1"/>
</dbReference>
<dbReference type="InterPro" id="IPR003761">
    <property type="entry name" value="Exonuc_VII_S"/>
</dbReference>
<dbReference type="InterPro" id="IPR037004">
    <property type="entry name" value="Exonuc_VII_ssu_sf"/>
</dbReference>
<dbReference type="NCBIfam" id="NF002141">
    <property type="entry name" value="PRK00977.1-5"/>
    <property type="match status" value="1"/>
</dbReference>
<dbReference type="NCBIfam" id="TIGR01280">
    <property type="entry name" value="xseB"/>
    <property type="match status" value="1"/>
</dbReference>
<dbReference type="PANTHER" id="PTHR34137">
    <property type="entry name" value="EXODEOXYRIBONUCLEASE 7 SMALL SUBUNIT"/>
    <property type="match status" value="1"/>
</dbReference>
<dbReference type="PANTHER" id="PTHR34137:SF1">
    <property type="entry name" value="EXODEOXYRIBONUCLEASE 7 SMALL SUBUNIT"/>
    <property type="match status" value="1"/>
</dbReference>
<dbReference type="Pfam" id="PF02609">
    <property type="entry name" value="Exonuc_VII_S"/>
    <property type="match status" value="1"/>
</dbReference>
<dbReference type="SUPFAM" id="SSF116842">
    <property type="entry name" value="XseB-like"/>
    <property type="match status" value="1"/>
</dbReference>
<organism>
    <name type="scientific">Burkholderia mallei (strain ATCC 23344)</name>
    <dbReference type="NCBI Taxonomy" id="243160"/>
    <lineage>
        <taxon>Bacteria</taxon>
        <taxon>Pseudomonadati</taxon>
        <taxon>Pseudomonadota</taxon>
        <taxon>Betaproteobacteria</taxon>
        <taxon>Burkholderiales</taxon>
        <taxon>Burkholderiaceae</taxon>
        <taxon>Burkholderia</taxon>
        <taxon>pseudomallei group</taxon>
    </lineage>
</organism>
<proteinExistence type="inferred from homology"/>
<feature type="chain" id="PRO_0000206931" description="Exodeoxyribonuclease 7 small subunit">
    <location>
        <begin position="1"/>
        <end position="97"/>
    </location>
</feature>
<feature type="region of interest" description="Disordered" evidence="2">
    <location>
        <begin position="1"/>
        <end position="21"/>
    </location>
</feature>
<sequence length="97" mass="9967">MAKTATPGACASDPGSGPLPENYEMALAELEALVARMEGGTLSLEDSLAAYRRGAALVAFCQQQLEKAEQQVRVLDGASLKPLSAGTAAADGEDDDL</sequence>
<gene>
    <name evidence="1" type="primary">xseB</name>
    <name type="ordered locus">BMAA0328</name>
</gene>
<evidence type="ECO:0000255" key="1">
    <source>
        <dbReference type="HAMAP-Rule" id="MF_00337"/>
    </source>
</evidence>
<evidence type="ECO:0000256" key="2">
    <source>
        <dbReference type="SAM" id="MobiDB-lite"/>
    </source>
</evidence>
<name>EX7S_BURMA</name>
<comment type="function">
    <text evidence="1">Bidirectionally degrades single-stranded DNA into large acid-insoluble oligonucleotides, which are then degraded further into small acid-soluble oligonucleotides.</text>
</comment>
<comment type="catalytic activity">
    <reaction evidence="1">
        <text>Exonucleolytic cleavage in either 5'- to 3'- or 3'- to 5'-direction to yield nucleoside 5'-phosphates.</text>
        <dbReference type="EC" id="3.1.11.6"/>
    </reaction>
</comment>
<comment type="subunit">
    <text evidence="1">Heterooligomer composed of large and small subunits.</text>
</comment>
<comment type="subcellular location">
    <subcellularLocation>
        <location evidence="1">Cytoplasm</location>
    </subcellularLocation>
</comment>
<comment type="similarity">
    <text evidence="1">Belongs to the XseB family.</text>
</comment>
<accession>Q62DU3</accession>
<reference key="1">
    <citation type="journal article" date="2004" name="Proc. Natl. Acad. Sci. U.S.A.">
        <title>Structural flexibility in the Burkholderia mallei genome.</title>
        <authorList>
            <person name="Nierman W.C."/>
            <person name="DeShazer D."/>
            <person name="Kim H.S."/>
            <person name="Tettelin H."/>
            <person name="Nelson K.E."/>
            <person name="Feldblyum T.V."/>
            <person name="Ulrich R.L."/>
            <person name="Ronning C.M."/>
            <person name="Brinkac L.M."/>
            <person name="Daugherty S.C."/>
            <person name="Davidsen T.D."/>
            <person name="DeBoy R.T."/>
            <person name="Dimitrov G."/>
            <person name="Dodson R.J."/>
            <person name="Durkin A.S."/>
            <person name="Gwinn M.L."/>
            <person name="Haft D.H."/>
            <person name="Khouri H.M."/>
            <person name="Kolonay J.F."/>
            <person name="Madupu R."/>
            <person name="Mohammoud Y."/>
            <person name="Nelson W.C."/>
            <person name="Radune D."/>
            <person name="Romero C.M."/>
            <person name="Sarria S."/>
            <person name="Selengut J."/>
            <person name="Shamblin C."/>
            <person name="Sullivan S.A."/>
            <person name="White O."/>
            <person name="Yu Y."/>
            <person name="Zafar N."/>
            <person name="Zhou L."/>
            <person name="Fraser C.M."/>
        </authorList>
    </citation>
    <scope>NUCLEOTIDE SEQUENCE [LARGE SCALE GENOMIC DNA]</scope>
    <source>
        <strain>ATCC 23344</strain>
    </source>
</reference>